<evidence type="ECO:0000250" key="1">
    <source>
        <dbReference type="UniProtKB" id="Q9BRQ4"/>
    </source>
</evidence>
<evidence type="ECO:0000269" key="2">
    <source>
    </source>
</evidence>
<evidence type="ECO:0000305" key="3"/>
<feature type="chain" id="PRO_0000444630" description="Cilia- and flagella-associated protein 300">
    <location>
        <begin position="1"/>
        <end position="257"/>
    </location>
</feature>
<gene>
    <name evidence="1" type="primary">CFAP300</name>
    <name type="synonym">FBB5</name>
    <name evidence="3" type="ORF">CHLRE_12g556300v5</name>
    <name type="ORF">CHLREDRAFT_190937</name>
</gene>
<dbReference type="EMBL" id="DS496127">
    <property type="protein sequence ID" value="EDP02986.1"/>
    <property type="molecule type" value="Genomic_DNA"/>
</dbReference>
<dbReference type="EMBL" id="CM008973">
    <property type="protein sequence ID" value="PNW75890.1"/>
    <property type="molecule type" value="Genomic_DNA"/>
</dbReference>
<dbReference type="RefSeq" id="XP_001694050.1">
    <property type="nucleotide sequence ID" value="XM_001693998.1"/>
</dbReference>
<dbReference type="STRING" id="3055.A8IYS6"/>
<dbReference type="PaxDb" id="3055-EDP02986"/>
<dbReference type="EnsemblPlants" id="PNW75890">
    <property type="protein sequence ID" value="PNW75890"/>
    <property type="gene ID" value="CHLRE_12g556300v5"/>
</dbReference>
<dbReference type="GeneID" id="5719752"/>
<dbReference type="Gramene" id="PNW75890">
    <property type="protein sequence ID" value="PNW75890"/>
    <property type="gene ID" value="CHLRE_12g556300v5"/>
</dbReference>
<dbReference type="KEGG" id="cre:CHLRE_12g556300v5"/>
<dbReference type="eggNOG" id="ENOG502QUFH">
    <property type="taxonomic scope" value="Eukaryota"/>
</dbReference>
<dbReference type="HOGENOM" id="CLU_068703_0_0_1"/>
<dbReference type="InParanoid" id="A8IYS6"/>
<dbReference type="OMA" id="FYHCYGV"/>
<dbReference type="OrthoDB" id="567861at2759"/>
<dbReference type="Proteomes" id="UP000006906">
    <property type="component" value="Chromosome 12"/>
</dbReference>
<dbReference type="GO" id="GO:0005737">
    <property type="term" value="C:cytoplasm"/>
    <property type="evidence" value="ECO:0000314"/>
    <property type="project" value="UniProtKB"/>
</dbReference>
<dbReference type="GO" id="GO:0005856">
    <property type="term" value="C:cytoskeleton"/>
    <property type="evidence" value="ECO:0007669"/>
    <property type="project" value="UniProtKB-KW"/>
</dbReference>
<dbReference type="GO" id="GO:0031514">
    <property type="term" value="C:motile cilium"/>
    <property type="evidence" value="ECO:0000314"/>
    <property type="project" value="UniProtKB"/>
</dbReference>
<dbReference type="InterPro" id="IPR029416">
    <property type="entry name" value="CFAP300"/>
</dbReference>
<dbReference type="PANTHER" id="PTHR31078">
    <property type="entry name" value="CILIA- AND FLAGELLA-ASSOCIATED PROTEIN 300"/>
    <property type="match status" value="1"/>
</dbReference>
<dbReference type="PANTHER" id="PTHR31078:SF1">
    <property type="entry name" value="CILIA- AND FLAGELLA-ASSOCIATED PROTEIN 300"/>
    <property type="match status" value="1"/>
</dbReference>
<dbReference type="Pfam" id="PF14926">
    <property type="entry name" value="CFAP300"/>
    <property type="match status" value="1"/>
</dbReference>
<sequence length="257" mass="29163">MTAFVPVSLPSTSALNDAYVKSQLTKWDLLRNLRCVAVRYTKYYHKLQGQELLADLFRDEKVQEAFQVLRKGGAWGQLGGPVTKVDATLLASSLTRMDLFDKLTETSPPIVRSNGDIGKCMEDNREGFQVSDQLRELILVEESEHAALFSEAERDELLWRLFEHVVLGGACCQFEDKVEPYVETSKRLYKELVCAQKDPATGKVQTVSAVYKINSIQGDSGPLELYPSRSRQNFCYAAVDPVRRIVKILYHAYVPYW</sequence>
<proteinExistence type="inferred from homology"/>
<organism>
    <name type="scientific">Chlamydomonas reinhardtii</name>
    <name type="common">Chlamydomonas smithii</name>
    <dbReference type="NCBI Taxonomy" id="3055"/>
    <lineage>
        <taxon>Eukaryota</taxon>
        <taxon>Viridiplantae</taxon>
        <taxon>Chlorophyta</taxon>
        <taxon>core chlorophytes</taxon>
        <taxon>Chlorophyceae</taxon>
        <taxon>CS clade</taxon>
        <taxon>Chlamydomonadales</taxon>
        <taxon>Chlamydomonadaceae</taxon>
        <taxon>Chlamydomonas</taxon>
    </lineage>
</organism>
<accession>A8IYS6</accession>
<comment type="function">
    <text evidence="2">Cilium- and flagellum-specific protein that plays a role in axonemal structure organization and motility. Plays a role in outer and inner dynein arm assembly.</text>
</comment>
<comment type="subcellular location">
    <subcellularLocation>
        <location evidence="2">Cytoplasm</location>
    </subcellularLocation>
    <subcellularLocation>
        <location evidence="2">Cytoplasm</location>
        <location evidence="2">Cytoskeleton</location>
        <location evidence="2">Flagellum axoneme</location>
    </subcellularLocation>
    <text evidence="2">Localizes predominantly in the cytoplasm and weakly in flagella. Transported to the flagellar matrix in an intraflagellar transport (IFT)-dependent manner.</text>
</comment>
<comment type="similarity">
    <text evidence="3">Belongs to the CFAP300 family.</text>
</comment>
<protein>
    <recommendedName>
        <fullName evidence="3">Cilia- and flagella-associated protein 300</fullName>
    </recommendedName>
    <alternativeName>
        <fullName>Flagellar and basal body protein</fullName>
    </alternativeName>
</protein>
<keyword id="KW-0966">Cell projection</keyword>
<keyword id="KW-0969">Cilium</keyword>
<keyword id="KW-0963">Cytoplasm</keyword>
<keyword id="KW-0206">Cytoskeleton</keyword>
<keyword id="KW-0282">Flagellum</keyword>
<keyword id="KW-1185">Reference proteome</keyword>
<name>CF300_CHLRE</name>
<reference key="1">
    <citation type="journal article" date="2007" name="Science">
        <title>The Chlamydomonas genome reveals the evolution of key animal and plant functions.</title>
        <authorList>
            <person name="Merchant S.S."/>
            <person name="Prochnik S.E."/>
            <person name="Vallon O."/>
            <person name="Harris E.H."/>
            <person name="Karpowicz S.J."/>
            <person name="Witman G.B."/>
            <person name="Terry A."/>
            <person name="Salamov A."/>
            <person name="Fritz-Laylin L.K."/>
            <person name="Marechal-Drouard L."/>
            <person name="Marshall W.F."/>
            <person name="Qu L.H."/>
            <person name="Nelson D.R."/>
            <person name="Sanderfoot A.A."/>
            <person name="Spalding M.H."/>
            <person name="Kapitonov V.V."/>
            <person name="Ren Q."/>
            <person name="Ferris P."/>
            <person name="Lindquist E."/>
            <person name="Shapiro H."/>
            <person name="Lucas S.M."/>
            <person name="Grimwood J."/>
            <person name="Schmutz J."/>
            <person name="Cardol P."/>
            <person name="Cerutti H."/>
            <person name="Chanfreau G."/>
            <person name="Chen C.L."/>
            <person name="Cognat V."/>
            <person name="Croft M.T."/>
            <person name="Dent R."/>
            <person name="Dutcher S."/>
            <person name="Fernandez E."/>
            <person name="Fukuzawa H."/>
            <person name="Gonzalez-Ballester D."/>
            <person name="Gonzalez-Halphen D."/>
            <person name="Hallmann A."/>
            <person name="Hanikenne M."/>
            <person name="Hippler M."/>
            <person name="Inwood W."/>
            <person name="Jabbari K."/>
            <person name="Kalanon M."/>
            <person name="Kuras R."/>
            <person name="Lefebvre P.A."/>
            <person name="Lemaire S.D."/>
            <person name="Lobanov A.V."/>
            <person name="Lohr M."/>
            <person name="Manuell A."/>
            <person name="Meier I."/>
            <person name="Mets L."/>
            <person name="Mittag M."/>
            <person name="Mittelmeier T."/>
            <person name="Moroney J.V."/>
            <person name="Moseley J."/>
            <person name="Napoli C."/>
            <person name="Nedelcu A.M."/>
            <person name="Niyogi K."/>
            <person name="Novoselov S.V."/>
            <person name="Paulsen I.T."/>
            <person name="Pazour G.J."/>
            <person name="Purton S."/>
            <person name="Ral J.P."/>
            <person name="Riano-Pachon D.M."/>
            <person name="Riekhof W."/>
            <person name="Rymarquis L."/>
            <person name="Schroda M."/>
            <person name="Stern D."/>
            <person name="Umen J."/>
            <person name="Willows R."/>
            <person name="Wilson N."/>
            <person name="Zimmer S.L."/>
            <person name="Allmer J."/>
            <person name="Balk J."/>
            <person name="Bisova K."/>
            <person name="Chen C.J."/>
            <person name="Elias M."/>
            <person name="Gendler K."/>
            <person name="Hauser C."/>
            <person name="Lamb M.R."/>
            <person name="Ledford H."/>
            <person name="Long J.C."/>
            <person name="Minagawa J."/>
            <person name="Page M.D."/>
            <person name="Pan J."/>
            <person name="Pootakham W."/>
            <person name="Roje S."/>
            <person name="Rose A."/>
            <person name="Stahlberg E."/>
            <person name="Terauchi A.M."/>
            <person name="Yang P."/>
            <person name="Ball S."/>
            <person name="Bowler C."/>
            <person name="Dieckmann C.L."/>
            <person name="Gladyshev V.N."/>
            <person name="Green P."/>
            <person name="Jorgensen R."/>
            <person name="Mayfield S."/>
            <person name="Mueller-Roeber B."/>
            <person name="Rajamani S."/>
            <person name="Sayre R.T."/>
            <person name="Brokstein P."/>
            <person name="Dubchak I."/>
            <person name="Goodstein D."/>
            <person name="Hornick L."/>
            <person name="Huang Y.W."/>
            <person name="Jhaveri J."/>
            <person name="Luo Y."/>
            <person name="Martinez D."/>
            <person name="Ngau W.C."/>
            <person name="Otillar B."/>
            <person name="Poliakov A."/>
            <person name="Porter A."/>
            <person name="Szajkowski L."/>
            <person name="Werner G."/>
            <person name="Zhou K."/>
            <person name="Grigoriev I.V."/>
            <person name="Rokhsar D.S."/>
            <person name="Grossman A.R."/>
        </authorList>
    </citation>
    <scope>NUCLEOTIDE SEQUENCE [LARGE SCALE GENOMIC DNA]</scope>
    <source>
        <strain>CC-503</strain>
    </source>
</reference>
<reference key="2">
    <citation type="journal article" date="2018" name="Am. J. Hum. Genet.">
        <title>C11orf70 mutations disrupting the intraflagellar transport-dependent assembly of multiple axonemal dyneins cause primary ciliary dyskinesia.</title>
        <authorList>
            <person name="Fassad M.R."/>
            <person name="Shoemark A."/>
            <person name="le Borgne P."/>
            <person name="Koll F."/>
            <person name="Patel M."/>
            <person name="Dixon M."/>
            <person name="Hayward J."/>
            <person name="Richardson C."/>
            <person name="Frost E."/>
            <person name="Jenkins L."/>
            <person name="Cullup T."/>
            <person name="Chung E.M.K."/>
            <person name="Lemullois M."/>
            <person name="Aubusson-Fleury A."/>
            <person name="Hogg C."/>
            <person name="Mitchell D.R."/>
            <person name="Tassin A.M."/>
            <person name="Mitchison H.M."/>
        </authorList>
    </citation>
    <scope>FUNCTION</scope>
    <scope>SUBCELLULAR LOCATION</scope>
</reference>